<dbReference type="EC" id="2.1.1.182" evidence="1"/>
<dbReference type="EMBL" id="BA000037">
    <property type="protein sequence ID" value="BAC93242.1"/>
    <property type="molecule type" value="Genomic_DNA"/>
</dbReference>
<dbReference type="RefSeq" id="WP_011078742.1">
    <property type="nucleotide sequence ID" value="NC_005139.1"/>
</dbReference>
<dbReference type="SMR" id="Q7MP86"/>
<dbReference type="STRING" id="672.VV93_v1c04450"/>
<dbReference type="GeneID" id="93894970"/>
<dbReference type="KEGG" id="vvy:VV0478"/>
<dbReference type="eggNOG" id="COG0030">
    <property type="taxonomic scope" value="Bacteria"/>
</dbReference>
<dbReference type="HOGENOM" id="CLU_041220_0_1_6"/>
<dbReference type="Proteomes" id="UP000002675">
    <property type="component" value="Chromosome I"/>
</dbReference>
<dbReference type="GO" id="GO:0005829">
    <property type="term" value="C:cytosol"/>
    <property type="evidence" value="ECO:0007669"/>
    <property type="project" value="TreeGrafter"/>
</dbReference>
<dbReference type="GO" id="GO:0052908">
    <property type="term" value="F:16S rRNA (adenine(1518)-N(6)/adenine(1519)-N(6))-dimethyltransferase activity"/>
    <property type="evidence" value="ECO:0007669"/>
    <property type="project" value="UniProtKB-EC"/>
</dbReference>
<dbReference type="GO" id="GO:0003723">
    <property type="term" value="F:RNA binding"/>
    <property type="evidence" value="ECO:0007669"/>
    <property type="project" value="UniProtKB-KW"/>
</dbReference>
<dbReference type="FunFam" id="1.10.8.100:FF:000001">
    <property type="entry name" value="Ribosomal RNA small subunit methyltransferase A"/>
    <property type="match status" value="1"/>
</dbReference>
<dbReference type="FunFam" id="3.40.50.150:FF:000006">
    <property type="entry name" value="Ribosomal RNA small subunit methyltransferase A"/>
    <property type="match status" value="1"/>
</dbReference>
<dbReference type="Gene3D" id="1.10.8.100">
    <property type="entry name" value="Ribosomal RNA adenine dimethylase-like, domain 2"/>
    <property type="match status" value="1"/>
</dbReference>
<dbReference type="Gene3D" id="3.40.50.150">
    <property type="entry name" value="Vaccinia Virus protein VP39"/>
    <property type="match status" value="1"/>
</dbReference>
<dbReference type="HAMAP" id="MF_00607">
    <property type="entry name" value="16SrRNA_methyltr_A"/>
    <property type="match status" value="1"/>
</dbReference>
<dbReference type="InterPro" id="IPR001737">
    <property type="entry name" value="KsgA/Erm"/>
</dbReference>
<dbReference type="InterPro" id="IPR023165">
    <property type="entry name" value="rRNA_Ade_diMease-like_C"/>
</dbReference>
<dbReference type="InterPro" id="IPR020596">
    <property type="entry name" value="rRNA_Ade_Mease_Trfase_CS"/>
</dbReference>
<dbReference type="InterPro" id="IPR020598">
    <property type="entry name" value="rRNA_Ade_methylase_Trfase_N"/>
</dbReference>
<dbReference type="InterPro" id="IPR011530">
    <property type="entry name" value="rRNA_adenine_dimethylase"/>
</dbReference>
<dbReference type="InterPro" id="IPR029063">
    <property type="entry name" value="SAM-dependent_MTases_sf"/>
</dbReference>
<dbReference type="NCBIfam" id="TIGR00755">
    <property type="entry name" value="ksgA"/>
    <property type="match status" value="1"/>
</dbReference>
<dbReference type="PANTHER" id="PTHR11727">
    <property type="entry name" value="DIMETHYLADENOSINE TRANSFERASE"/>
    <property type="match status" value="1"/>
</dbReference>
<dbReference type="PANTHER" id="PTHR11727:SF7">
    <property type="entry name" value="DIMETHYLADENOSINE TRANSFERASE-RELATED"/>
    <property type="match status" value="1"/>
</dbReference>
<dbReference type="Pfam" id="PF00398">
    <property type="entry name" value="RrnaAD"/>
    <property type="match status" value="1"/>
</dbReference>
<dbReference type="SMART" id="SM00650">
    <property type="entry name" value="rADc"/>
    <property type="match status" value="1"/>
</dbReference>
<dbReference type="SUPFAM" id="SSF53335">
    <property type="entry name" value="S-adenosyl-L-methionine-dependent methyltransferases"/>
    <property type="match status" value="1"/>
</dbReference>
<dbReference type="PROSITE" id="PS01131">
    <property type="entry name" value="RRNA_A_DIMETH"/>
    <property type="match status" value="1"/>
</dbReference>
<dbReference type="PROSITE" id="PS51689">
    <property type="entry name" value="SAM_RNA_A_N6_MT"/>
    <property type="match status" value="1"/>
</dbReference>
<reference key="1">
    <citation type="journal article" date="2003" name="Genome Res.">
        <title>Comparative genome analysis of Vibrio vulnificus, a marine pathogen.</title>
        <authorList>
            <person name="Chen C.-Y."/>
            <person name="Wu K.-M."/>
            <person name="Chang Y.-C."/>
            <person name="Chang C.-H."/>
            <person name="Tsai H.-C."/>
            <person name="Liao T.-L."/>
            <person name="Liu Y.-M."/>
            <person name="Chen H.-J."/>
            <person name="Shen A.B.-T."/>
            <person name="Li J.-C."/>
            <person name="Su T.-L."/>
            <person name="Shao C.-P."/>
            <person name="Lee C.-T."/>
            <person name="Hor L.-I."/>
            <person name="Tsai S.-F."/>
        </authorList>
    </citation>
    <scope>NUCLEOTIDE SEQUENCE [LARGE SCALE GENOMIC DNA]</scope>
    <source>
        <strain>YJ016</strain>
    </source>
</reference>
<sequence length="268" mass="30621">MRNDVHMGHKARKRFGQNFLNDPYIIDGIVSAINPRPGQNLVEIGPGLGAITEPVGREVDKFTVIELDRDLAERLRTHPELADKLTIHEGDAMRFDFTQLVKPNNKLRIFGNLPYNISTPLMFHLFEFHKDIQDMHFMLQKEVVNRLAAGPGSKAYGRLTVMAQYYCKVVPVLEVPPTAFVPPPKVDSAVVRLVPYETLPHPANNLQWLERVCREGFNQRRKTVRNCYKSLMSEQVLEELGVNPGMRPENLTLQQFVAMANWLDANHK</sequence>
<gene>
    <name evidence="1" type="primary">rsmA</name>
    <name evidence="1" type="synonym">ksgA</name>
    <name type="ordered locus">VV0478</name>
</gene>
<comment type="function">
    <text evidence="1">Specifically dimethylates two adjacent adenosines (A1518 and A1519) in the loop of a conserved hairpin near the 3'-end of 16S rRNA in the 30S particle. May play a critical role in biogenesis of 30S subunits.</text>
</comment>
<comment type="catalytic activity">
    <reaction evidence="1">
        <text>adenosine(1518)/adenosine(1519) in 16S rRNA + 4 S-adenosyl-L-methionine = N(6)-dimethyladenosine(1518)/N(6)-dimethyladenosine(1519) in 16S rRNA + 4 S-adenosyl-L-homocysteine + 4 H(+)</text>
        <dbReference type="Rhea" id="RHEA:19609"/>
        <dbReference type="Rhea" id="RHEA-COMP:10232"/>
        <dbReference type="Rhea" id="RHEA-COMP:10233"/>
        <dbReference type="ChEBI" id="CHEBI:15378"/>
        <dbReference type="ChEBI" id="CHEBI:57856"/>
        <dbReference type="ChEBI" id="CHEBI:59789"/>
        <dbReference type="ChEBI" id="CHEBI:74411"/>
        <dbReference type="ChEBI" id="CHEBI:74493"/>
        <dbReference type="EC" id="2.1.1.182"/>
    </reaction>
</comment>
<comment type="subcellular location">
    <subcellularLocation>
        <location evidence="1">Cytoplasm</location>
    </subcellularLocation>
</comment>
<comment type="similarity">
    <text evidence="1">Belongs to the class I-like SAM-binding methyltransferase superfamily. rRNA adenine N(6)-methyltransferase family. RsmA subfamily.</text>
</comment>
<proteinExistence type="inferred from homology"/>
<keyword id="KW-0963">Cytoplasm</keyword>
<keyword id="KW-0489">Methyltransferase</keyword>
<keyword id="KW-0694">RNA-binding</keyword>
<keyword id="KW-0698">rRNA processing</keyword>
<keyword id="KW-0949">S-adenosyl-L-methionine</keyword>
<keyword id="KW-0808">Transferase</keyword>
<name>RSMA_VIBVY</name>
<feature type="chain" id="PRO_0000101640" description="Ribosomal RNA small subunit methyltransferase A">
    <location>
        <begin position="1"/>
        <end position="268"/>
    </location>
</feature>
<feature type="binding site" evidence="1">
    <location>
        <position position="18"/>
    </location>
    <ligand>
        <name>S-adenosyl-L-methionine</name>
        <dbReference type="ChEBI" id="CHEBI:59789"/>
    </ligand>
</feature>
<feature type="binding site" evidence="1">
    <location>
        <position position="20"/>
    </location>
    <ligand>
        <name>S-adenosyl-L-methionine</name>
        <dbReference type="ChEBI" id="CHEBI:59789"/>
    </ligand>
</feature>
<feature type="binding site" evidence="1">
    <location>
        <position position="45"/>
    </location>
    <ligand>
        <name>S-adenosyl-L-methionine</name>
        <dbReference type="ChEBI" id="CHEBI:59789"/>
    </ligand>
</feature>
<feature type="binding site" evidence="1">
    <location>
        <position position="66"/>
    </location>
    <ligand>
        <name>S-adenosyl-L-methionine</name>
        <dbReference type="ChEBI" id="CHEBI:59789"/>
    </ligand>
</feature>
<feature type="binding site" evidence="1">
    <location>
        <position position="91"/>
    </location>
    <ligand>
        <name>S-adenosyl-L-methionine</name>
        <dbReference type="ChEBI" id="CHEBI:59789"/>
    </ligand>
</feature>
<feature type="binding site" evidence="1">
    <location>
        <position position="112"/>
    </location>
    <ligand>
        <name>S-adenosyl-L-methionine</name>
        <dbReference type="ChEBI" id="CHEBI:59789"/>
    </ligand>
</feature>
<accession>Q7MP86</accession>
<evidence type="ECO:0000255" key="1">
    <source>
        <dbReference type="HAMAP-Rule" id="MF_00607"/>
    </source>
</evidence>
<organism>
    <name type="scientific">Vibrio vulnificus (strain YJ016)</name>
    <dbReference type="NCBI Taxonomy" id="196600"/>
    <lineage>
        <taxon>Bacteria</taxon>
        <taxon>Pseudomonadati</taxon>
        <taxon>Pseudomonadota</taxon>
        <taxon>Gammaproteobacteria</taxon>
        <taxon>Vibrionales</taxon>
        <taxon>Vibrionaceae</taxon>
        <taxon>Vibrio</taxon>
    </lineage>
</organism>
<protein>
    <recommendedName>
        <fullName evidence="1">Ribosomal RNA small subunit methyltransferase A</fullName>
        <ecNumber evidence="1">2.1.1.182</ecNumber>
    </recommendedName>
    <alternativeName>
        <fullName evidence="1">16S rRNA (adenine(1518)-N(6)/adenine(1519)-N(6))-dimethyltransferase</fullName>
    </alternativeName>
    <alternativeName>
        <fullName evidence="1">16S rRNA dimethyladenosine transferase</fullName>
    </alternativeName>
    <alternativeName>
        <fullName evidence="1">16S rRNA dimethylase</fullName>
    </alternativeName>
    <alternativeName>
        <fullName evidence="1">S-adenosylmethionine-6-N', N'-adenosyl(rRNA) dimethyltransferase</fullName>
    </alternativeName>
</protein>